<gene>
    <name evidence="4" type="primary">Trappc14</name>
    <name evidence="4" type="synonym">Map11</name>
</gene>
<sequence length="580" mass="62750">MESQCDYSMYFPAVPLPPRAELAGDPGRYRALPRRNHLYLGETVRFLLVLRCRGSVGAGVGGGAGLASRGAWTELATSLAALASVSAGGALPGCGSAGDQDADPPGGGDPGGGGLFRGCSPLLTHGQGPATSGGATTLPVEEPIVSTDEVIFPLTVSLDRLPPGTPKAKIVVTVWKREVEAPEVRDQGYLRLLQTRSPGETFRGEQSAFKAQVSTLLTLLPPPVLKCRQFTVAGKHLTVLKVLNSSSQEEISIWDIRILPNFNASYLPVMPDGSVLLVDNVCHQSGEVSMGSFCRLPGTSGYFPCPLSALEEHNFLFQLRGGEQPPPGAKEGLEVPLIAVVQWSTPKLPFTQSIYTHYRLPSVRLDRPCFVMTASCESPVRTYERFTVTYTLLNNLQDFLAVRLVWTPEHAQAGKQLCEEERRAMQAALDSIVCHTPLNNLGFSRKGSALTFSVAFQALRTGLFELSQHMKLKLQFTASVSHPPPEARPLSRKSSPSSPAVRDLVERHQASLGRSQSFSHQQPSRSHLMRSGSVMERRAITPPVASPVGRPLYLPPDKAVLSLDKIAKRECKVLVVEPVK</sequence>
<reference key="1">
    <citation type="journal article" date="2005" name="Science">
        <title>The transcriptional landscape of the mammalian genome.</title>
        <authorList>
            <person name="Carninci P."/>
            <person name="Kasukawa T."/>
            <person name="Katayama S."/>
            <person name="Gough J."/>
            <person name="Frith M.C."/>
            <person name="Maeda N."/>
            <person name="Oyama R."/>
            <person name="Ravasi T."/>
            <person name="Lenhard B."/>
            <person name="Wells C."/>
            <person name="Kodzius R."/>
            <person name="Shimokawa K."/>
            <person name="Bajic V.B."/>
            <person name="Brenner S.E."/>
            <person name="Batalov S."/>
            <person name="Forrest A.R."/>
            <person name="Zavolan M."/>
            <person name="Davis M.J."/>
            <person name="Wilming L.G."/>
            <person name="Aidinis V."/>
            <person name="Allen J.E."/>
            <person name="Ambesi-Impiombato A."/>
            <person name="Apweiler R."/>
            <person name="Aturaliya R.N."/>
            <person name="Bailey T.L."/>
            <person name="Bansal M."/>
            <person name="Baxter L."/>
            <person name="Beisel K.W."/>
            <person name="Bersano T."/>
            <person name="Bono H."/>
            <person name="Chalk A.M."/>
            <person name="Chiu K.P."/>
            <person name="Choudhary V."/>
            <person name="Christoffels A."/>
            <person name="Clutterbuck D.R."/>
            <person name="Crowe M.L."/>
            <person name="Dalla E."/>
            <person name="Dalrymple B.P."/>
            <person name="de Bono B."/>
            <person name="Della Gatta G."/>
            <person name="di Bernardo D."/>
            <person name="Down T."/>
            <person name="Engstrom P."/>
            <person name="Fagiolini M."/>
            <person name="Faulkner G."/>
            <person name="Fletcher C.F."/>
            <person name="Fukushima T."/>
            <person name="Furuno M."/>
            <person name="Futaki S."/>
            <person name="Gariboldi M."/>
            <person name="Georgii-Hemming P."/>
            <person name="Gingeras T.R."/>
            <person name="Gojobori T."/>
            <person name="Green R.E."/>
            <person name="Gustincich S."/>
            <person name="Harbers M."/>
            <person name="Hayashi Y."/>
            <person name="Hensch T.K."/>
            <person name="Hirokawa N."/>
            <person name="Hill D."/>
            <person name="Huminiecki L."/>
            <person name="Iacono M."/>
            <person name="Ikeo K."/>
            <person name="Iwama A."/>
            <person name="Ishikawa T."/>
            <person name="Jakt M."/>
            <person name="Kanapin A."/>
            <person name="Katoh M."/>
            <person name="Kawasawa Y."/>
            <person name="Kelso J."/>
            <person name="Kitamura H."/>
            <person name="Kitano H."/>
            <person name="Kollias G."/>
            <person name="Krishnan S.P."/>
            <person name="Kruger A."/>
            <person name="Kummerfeld S.K."/>
            <person name="Kurochkin I.V."/>
            <person name="Lareau L.F."/>
            <person name="Lazarevic D."/>
            <person name="Lipovich L."/>
            <person name="Liu J."/>
            <person name="Liuni S."/>
            <person name="McWilliam S."/>
            <person name="Madan Babu M."/>
            <person name="Madera M."/>
            <person name="Marchionni L."/>
            <person name="Matsuda H."/>
            <person name="Matsuzawa S."/>
            <person name="Miki H."/>
            <person name="Mignone F."/>
            <person name="Miyake S."/>
            <person name="Morris K."/>
            <person name="Mottagui-Tabar S."/>
            <person name="Mulder N."/>
            <person name="Nakano N."/>
            <person name="Nakauchi H."/>
            <person name="Ng P."/>
            <person name="Nilsson R."/>
            <person name="Nishiguchi S."/>
            <person name="Nishikawa S."/>
            <person name="Nori F."/>
            <person name="Ohara O."/>
            <person name="Okazaki Y."/>
            <person name="Orlando V."/>
            <person name="Pang K.C."/>
            <person name="Pavan W.J."/>
            <person name="Pavesi G."/>
            <person name="Pesole G."/>
            <person name="Petrovsky N."/>
            <person name="Piazza S."/>
            <person name="Reed J."/>
            <person name="Reid J.F."/>
            <person name="Ring B.Z."/>
            <person name="Ringwald M."/>
            <person name="Rost B."/>
            <person name="Ruan Y."/>
            <person name="Salzberg S.L."/>
            <person name="Sandelin A."/>
            <person name="Schneider C."/>
            <person name="Schoenbach C."/>
            <person name="Sekiguchi K."/>
            <person name="Semple C.A."/>
            <person name="Seno S."/>
            <person name="Sessa L."/>
            <person name="Sheng Y."/>
            <person name="Shibata Y."/>
            <person name="Shimada H."/>
            <person name="Shimada K."/>
            <person name="Silva D."/>
            <person name="Sinclair B."/>
            <person name="Sperling S."/>
            <person name="Stupka E."/>
            <person name="Sugiura K."/>
            <person name="Sultana R."/>
            <person name="Takenaka Y."/>
            <person name="Taki K."/>
            <person name="Tammoja K."/>
            <person name="Tan S.L."/>
            <person name="Tang S."/>
            <person name="Taylor M.S."/>
            <person name="Tegner J."/>
            <person name="Teichmann S.A."/>
            <person name="Ueda H.R."/>
            <person name="van Nimwegen E."/>
            <person name="Verardo R."/>
            <person name="Wei C.L."/>
            <person name="Yagi K."/>
            <person name="Yamanishi H."/>
            <person name="Zabarovsky E."/>
            <person name="Zhu S."/>
            <person name="Zimmer A."/>
            <person name="Hide W."/>
            <person name="Bult C."/>
            <person name="Grimmond S.M."/>
            <person name="Teasdale R.D."/>
            <person name="Liu E.T."/>
            <person name="Brusic V."/>
            <person name="Quackenbush J."/>
            <person name="Wahlestedt C."/>
            <person name="Mattick J.S."/>
            <person name="Hume D.A."/>
            <person name="Kai C."/>
            <person name="Sasaki D."/>
            <person name="Tomaru Y."/>
            <person name="Fukuda S."/>
            <person name="Kanamori-Katayama M."/>
            <person name="Suzuki M."/>
            <person name="Aoki J."/>
            <person name="Arakawa T."/>
            <person name="Iida J."/>
            <person name="Imamura K."/>
            <person name="Itoh M."/>
            <person name="Kato T."/>
            <person name="Kawaji H."/>
            <person name="Kawagashira N."/>
            <person name="Kawashima T."/>
            <person name="Kojima M."/>
            <person name="Kondo S."/>
            <person name="Konno H."/>
            <person name="Nakano K."/>
            <person name="Ninomiya N."/>
            <person name="Nishio T."/>
            <person name="Okada M."/>
            <person name="Plessy C."/>
            <person name="Shibata K."/>
            <person name="Shiraki T."/>
            <person name="Suzuki S."/>
            <person name="Tagami M."/>
            <person name="Waki K."/>
            <person name="Watahiki A."/>
            <person name="Okamura-Oho Y."/>
            <person name="Suzuki H."/>
            <person name="Kawai J."/>
            <person name="Hayashizaki Y."/>
        </authorList>
    </citation>
    <scope>NUCLEOTIDE SEQUENCE [LARGE SCALE MRNA]</scope>
    <source>
        <strain>C57BL/6J</strain>
        <tissue>Aorta</tissue>
        <tissue>Vein</tissue>
    </source>
</reference>
<reference key="2">
    <citation type="journal article" date="2009" name="PLoS Biol.">
        <title>Lineage-specific biology revealed by a finished genome assembly of the mouse.</title>
        <authorList>
            <person name="Church D.M."/>
            <person name="Goodstadt L."/>
            <person name="Hillier L.W."/>
            <person name="Zody M.C."/>
            <person name="Goldstein S."/>
            <person name="She X."/>
            <person name="Bult C.J."/>
            <person name="Agarwala R."/>
            <person name="Cherry J.L."/>
            <person name="DiCuccio M."/>
            <person name="Hlavina W."/>
            <person name="Kapustin Y."/>
            <person name="Meric P."/>
            <person name="Maglott D."/>
            <person name="Birtle Z."/>
            <person name="Marques A.C."/>
            <person name="Graves T."/>
            <person name="Zhou S."/>
            <person name="Teague B."/>
            <person name="Potamousis K."/>
            <person name="Churas C."/>
            <person name="Place M."/>
            <person name="Herschleb J."/>
            <person name="Runnheim R."/>
            <person name="Forrest D."/>
            <person name="Amos-Landgraf J."/>
            <person name="Schwartz D.C."/>
            <person name="Cheng Z."/>
            <person name="Lindblad-Toh K."/>
            <person name="Eichler E.E."/>
            <person name="Ponting C.P."/>
        </authorList>
    </citation>
    <scope>NUCLEOTIDE SEQUENCE [LARGE SCALE GENOMIC DNA]</scope>
    <source>
        <strain>C57BL/6J</strain>
    </source>
</reference>
<reference key="3">
    <citation type="journal article" date="2004" name="Genome Res.">
        <title>The status, quality, and expansion of the NIH full-length cDNA project: the Mammalian Gene Collection (MGC).</title>
        <authorList>
            <consortium name="The MGC Project Team"/>
        </authorList>
    </citation>
    <scope>NUCLEOTIDE SEQUENCE [LARGE SCALE MRNA] OF 138-580</scope>
    <source>
        <tissue>Eye</tissue>
    </source>
</reference>
<reference key="4">
    <citation type="journal article" date="2010" name="Cell">
        <title>A tissue-specific atlas of mouse protein phosphorylation and expression.</title>
        <authorList>
            <person name="Huttlin E.L."/>
            <person name="Jedrychowski M.P."/>
            <person name="Elias J.E."/>
            <person name="Goswami T."/>
            <person name="Rad R."/>
            <person name="Beausoleil S.A."/>
            <person name="Villen J."/>
            <person name="Haas W."/>
            <person name="Sowa M.E."/>
            <person name="Gygi S.P."/>
        </authorList>
    </citation>
    <scope>IDENTIFICATION BY MASS SPECTROMETRY [LARGE SCALE ANALYSIS]</scope>
    <source>
        <tissue>Brain</tissue>
    </source>
</reference>
<evidence type="ECO:0000250" key="1">
    <source>
        <dbReference type="UniProtKB" id="Q8WVR3"/>
    </source>
</evidence>
<evidence type="ECO:0000256" key="2">
    <source>
        <dbReference type="SAM" id="MobiDB-lite"/>
    </source>
</evidence>
<evidence type="ECO:0000305" key="3"/>
<evidence type="ECO:0000312" key="4">
    <source>
        <dbReference type="MGI" id="MGI:2385896"/>
    </source>
</evidence>
<dbReference type="EMBL" id="AK138960">
    <property type="protein sequence ID" value="BAE23836.1"/>
    <property type="molecule type" value="mRNA"/>
</dbReference>
<dbReference type="EMBL" id="AC159257">
    <property type="status" value="NOT_ANNOTATED_CDS"/>
    <property type="molecule type" value="Genomic_DNA"/>
</dbReference>
<dbReference type="EMBL" id="BC037034">
    <property type="protein sequence ID" value="AAH37034.1"/>
    <property type="status" value="ALT_INIT"/>
    <property type="molecule type" value="mRNA"/>
</dbReference>
<dbReference type="CCDS" id="CCDS39343.2"/>
<dbReference type="RefSeq" id="NP_694801.2">
    <property type="nucleotide sequence ID" value="NM_153161.3"/>
</dbReference>
<dbReference type="FunCoup" id="Q3UTZ3">
    <property type="interactions" value="1642"/>
</dbReference>
<dbReference type="IntAct" id="Q3UTZ3">
    <property type="interactions" value="1"/>
</dbReference>
<dbReference type="STRING" id="10090.ENSMUSP00000046898"/>
<dbReference type="GlyGen" id="Q3UTZ3">
    <property type="glycosylation" value="1 site"/>
</dbReference>
<dbReference type="iPTMnet" id="Q3UTZ3"/>
<dbReference type="PhosphoSitePlus" id="Q3UTZ3"/>
<dbReference type="jPOST" id="Q3UTZ3"/>
<dbReference type="PaxDb" id="10090-ENSMUSP00000046898"/>
<dbReference type="ProteomicsDB" id="357059"/>
<dbReference type="Antibodypedia" id="16406">
    <property type="antibodies" value="85 antibodies from 16 providers"/>
</dbReference>
<dbReference type="Ensembl" id="ENSMUST00000048421.14">
    <property type="protein sequence ID" value="ENSMUSP00000046898.8"/>
    <property type="gene ID" value="ENSMUSG00000036948.18"/>
</dbReference>
<dbReference type="GeneID" id="231807"/>
<dbReference type="KEGG" id="mmu:231807"/>
<dbReference type="UCSC" id="uc009afe.2">
    <property type="organism name" value="mouse"/>
</dbReference>
<dbReference type="AGR" id="MGI:2385896"/>
<dbReference type="CTD" id="55262"/>
<dbReference type="MGI" id="MGI:2385896">
    <property type="gene designation" value="Trappc14"/>
</dbReference>
<dbReference type="VEuPathDB" id="HostDB:ENSMUSG00000036948"/>
<dbReference type="eggNOG" id="ENOG502QSBJ">
    <property type="taxonomic scope" value="Eukaryota"/>
</dbReference>
<dbReference type="GeneTree" id="ENSGT00390000014725"/>
<dbReference type="HOGENOM" id="CLU_031637_0_0_1"/>
<dbReference type="InParanoid" id="Q3UTZ3"/>
<dbReference type="OMA" id="FVMTARC"/>
<dbReference type="OrthoDB" id="6047286at2759"/>
<dbReference type="PhylomeDB" id="Q3UTZ3"/>
<dbReference type="TreeFam" id="TF331500"/>
<dbReference type="BioGRID-ORCS" id="231807">
    <property type="hits" value="0 hits in 77 CRISPR screens"/>
</dbReference>
<dbReference type="CD-CODE" id="CE726F99">
    <property type="entry name" value="Postsynaptic density"/>
</dbReference>
<dbReference type="ChiTaRS" id="BC037034">
    <property type="organism name" value="mouse"/>
</dbReference>
<dbReference type="PRO" id="PR:Q3UTZ3"/>
<dbReference type="Proteomes" id="UP000000589">
    <property type="component" value="Chromosome 5"/>
</dbReference>
<dbReference type="RNAct" id="Q3UTZ3">
    <property type="molecule type" value="protein"/>
</dbReference>
<dbReference type="Bgee" id="ENSMUSG00000036948">
    <property type="expression patterns" value="Expressed in granulocyte and 84 other cell types or tissues"/>
</dbReference>
<dbReference type="GO" id="GO:0034451">
    <property type="term" value="C:centriolar satellite"/>
    <property type="evidence" value="ECO:0007669"/>
    <property type="project" value="Ensembl"/>
</dbReference>
<dbReference type="GO" id="GO:0030496">
    <property type="term" value="C:midbody"/>
    <property type="evidence" value="ECO:0000250"/>
    <property type="project" value="UniProtKB"/>
</dbReference>
<dbReference type="GO" id="GO:0072686">
    <property type="term" value="C:mitotic spindle"/>
    <property type="evidence" value="ECO:0000250"/>
    <property type="project" value="UniProtKB"/>
</dbReference>
<dbReference type="GO" id="GO:0005886">
    <property type="term" value="C:plasma membrane"/>
    <property type="evidence" value="ECO:0007669"/>
    <property type="project" value="Ensembl"/>
</dbReference>
<dbReference type="GO" id="GO:1990071">
    <property type="term" value="C:TRAPPII protein complex"/>
    <property type="evidence" value="ECO:0000250"/>
    <property type="project" value="UniProtKB"/>
</dbReference>
<dbReference type="GO" id="GO:0043014">
    <property type="term" value="F:alpha-tubulin binding"/>
    <property type="evidence" value="ECO:0000250"/>
    <property type="project" value="UniProtKB"/>
</dbReference>
<dbReference type="GO" id="GO:0060271">
    <property type="term" value="P:cilium assembly"/>
    <property type="evidence" value="ECO:0007669"/>
    <property type="project" value="Ensembl"/>
</dbReference>
<dbReference type="GO" id="GO:0042127">
    <property type="term" value="P:regulation of cell population proliferation"/>
    <property type="evidence" value="ECO:0000250"/>
    <property type="project" value="UniProtKB"/>
</dbReference>
<dbReference type="InterPro" id="IPR055452">
    <property type="entry name" value="TRAPP14_C"/>
</dbReference>
<dbReference type="InterPro" id="IPR055453">
    <property type="entry name" value="TRAPP14_N"/>
</dbReference>
<dbReference type="InterPro" id="IPR031626">
    <property type="entry name" value="TRAPPC14"/>
</dbReference>
<dbReference type="PANTHER" id="PTHR16096">
    <property type="entry name" value="MICROTUBULE-ASSOCIATED PROTEIN 11"/>
    <property type="match status" value="1"/>
</dbReference>
<dbReference type="PANTHER" id="PTHR16096:SF8">
    <property type="entry name" value="TRAFFICKING PROTEIN PARTICLE COMPLEX SUBUNIT 14"/>
    <property type="match status" value="1"/>
</dbReference>
<dbReference type="Pfam" id="PF23652">
    <property type="entry name" value="TRAPP14_C"/>
    <property type="match status" value="1"/>
</dbReference>
<dbReference type="Pfam" id="PF15806">
    <property type="entry name" value="TRAPP14_N"/>
    <property type="match status" value="1"/>
</dbReference>
<proteinExistence type="evidence at protein level"/>
<feature type="chain" id="PRO_0000280345" description="Trafficking protein particle complex subunit 14">
    <location>
        <begin position="1"/>
        <end position="580"/>
    </location>
</feature>
<feature type="region of interest" description="Disordered" evidence="2">
    <location>
        <begin position="95"/>
        <end position="134"/>
    </location>
</feature>
<feature type="region of interest" description="Disordered" evidence="2">
    <location>
        <begin position="480"/>
        <end position="533"/>
    </location>
</feature>
<feature type="compositionally biased region" description="Gly residues" evidence="2">
    <location>
        <begin position="105"/>
        <end position="116"/>
    </location>
</feature>
<feature type="compositionally biased region" description="Low complexity" evidence="2">
    <location>
        <begin position="492"/>
        <end position="502"/>
    </location>
</feature>
<feature type="compositionally biased region" description="Polar residues" evidence="2">
    <location>
        <begin position="512"/>
        <end position="525"/>
    </location>
</feature>
<feature type="modified residue" description="Phosphoserine" evidence="1">
    <location>
        <position position="491"/>
    </location>
</feature>
<feature type="modified residue" description="Phosphoserine" evidence="1">
    <location>
        <position position="517"/>
    </location>
</feature>
<feature type="modified residue" description="Phosphothreonine" evidence="1">
    <location>
        <position position="541"/>
    </location>
</feature>
<feature type="modified residue" description="Phosphoserine" evidence="1">
    <location>
        <position position="546"/>
    </location>
</feature>
<feature type="sequence conflict" description="In Ref. 1; BAE23836." ref="1">
    <original>A</original>
    <variation>T</variation>
    <location>
        <position position="23"/>
    </location>
</feature>
<name>TPC14_MOUSE</name>
<comment type="function">
    <text evidence="1">Specific subunit of the TRAPP (transport protein particle) II complex, a highly conserved vesicle tethering complex that functions in late Golgi trafficking as a membrane tether. TRAPPC14 is dispensable for TRAPPII complex integrity but mediates RAB3IP preciliary vesicle trafficking to the mother centriole during ciliogenesis. Modulates YAP1 activity as transcriptional regulator.</text>
</comment>
<comment type="subunit">
    <text evidence="1">Component of the multisubunit TRAPP II complex, which includes at least TRAPPC1, TRAPPC2, TRAPPC2L, TRAPPC3, TRAPPC4, TRAPPC5, TRAPPC6A/B, TRAPPC9, TRAPPC10 and TRAPPC14. TRAPPC9, TRAPPC10 and TRAPPC14 are specific subunits of the TRAPP II complex. Interacts with alpha-tubulin during mitosis. Interacts with RAB3IP (via the N-terminal region); this interaction mediates RAB3IP association with the TRAPP II complex. Interacts with TRAPPC10. Interacts with FBF1.</text>
</comment>
<comment type="subcellular location">
    <subcellularLocation>
        <location evidence="1">Cytoplasm</location>
        <location evidence="1">Cytoskeleton</location>
        <location evidence="1">Spindle</location>
    </subcellularLocation>
    <subcellularLocation>
        <location evidence="1">Vesicle</location>
    </subcellularLocation>
    <subcellularLocation>
        <location evidence="1">Midbody</location>
    </subcellularLocation>
    <text evidence="1">During mitosis, precedes alpha-tubulin in gap formation of cell abscission at the midbody and is co-localized with PLK1 at the edges of microtubules extensions of daughter cells post cytokinesis abscission. Colocalizes with RAB3IP on preciliary vesicles.</text>
</comment>
<comment type="sequence caution" evidence="3">
    <conflict type="erroneous initiation">
        <sequence resource="EMBL-CDS" id="AAH37034"/>
    </conflict>
    <text>Truncated N-terminus.</text>
</comment>
<protein>
    <recommendedName>
        <fullName>Trafficking protein particle complex subunit 14</fullName>
    </recommendedName>
    <alternativeName>
        <fullName evidence="3">Microtubule-associated protein 11</fullName>
    </alternativeName>
</protein>
<organism>
    <name type="scientific">Mus musculus</name>
    <name type="common">Mouse</name>
    <dbReference type="NCBI Taxonomy" id="10090"/>
    <lineage>
        <taxon>Eukaryota</taxon>
        <taxon>Metazoa</taxon>
        <taxon>Chordata</taxon>
        <taxon>Craniata</taxon>
        <taxon>Vertebrata</taxon>
        <taxon>Euteleostomi</taxon>
        <taxon>Mammalia</taxon>
        <taxon>Eutheria</taxon>
        <taxon>Euarchontoglires</taxon>
        <taxon>Glires</taxon>
        <taxon>Rodentia</taxon>
        <taxon>Myomorpha</taxon>
        <taxon>Muroidea</taxon>
        <taxon>Muridae</taxon>
        <taxon>Murinae</taxon>
        <taxon>Mus</taxon>
        <taxon>Mus</taxon>
    </lineage>
</organism>
<accession>Q3UTZ3</accession>
<accession>E9Q2V5</accession>
<accession>Q8JZV2</accession>
<keyword id="KW-0970">Cilium biogenesis/degradation</keyword>
<keyword id="KW-0963">Cytoplasm</keyword>
<keyword id="KW-0206">Cytoskeleton</keyword>
<keyword id="KW-0597">Phosphoprotein</keyword>
<keyword id="KW-1185">Reference proteome</keyword>